<gene>
    <name type="primary">KEX1</name>
    <name type="ORF">BDBG_03944</name>
</gene>
<accession>C5JN54</accession>
<accession>A0A179UIP8</accession>
<proteinExistence type="inferred from homology"/>
<name>KEX1_BLAGS</name>
<evidence type="ECO:0000250" key="1"/>
<evidence type="ECO:0000255" key="2"/>
<evidence type="ECO:0000256" key="3">
    <source>
        <dbReference type="SAM" id="MobiDB-lite"/>
    </source>
</evidence>
<evidence type="ECO:0000305" key="4"/>
<keyword id="KW-0053">Apoptosis</keyword>
<keyword id="KW-0121">Carboxypeptidase</keyword>
<keyword id="KW-0325">Glycoprotein</keyword>
<keyword id="KW-0333">Golgi apparatus</keyword>
<keyword id="KW-0378">Hydrolase</keyword>
<keyword id="KW-0472">Membrane</keyword>
<keyword id="KW-0645">Protease</keyword>
<keyword id="KW-1185">Reference proteome</keyword>
<keyword id="KW-0732">Signal</keyword>
<keyword id="KW-0812">Transmembrane</keyword>
<keyword id="KW-1133">Transmembrane helix</keyword>
<protein>
    <recommendedName>
        <fullName>Pheromone-processing carboxypeptidase KEX1</fullName>
        <ecNumber>3.4.16.6</ecNumber>
    </recommendedName>
    <alternativeName>
        <fullName>Carboxypeptidase D</fullName>
    </alternativeName>
</protein>
<reference key="1">
    <citation type="journal article" date="2015" name="PLoS Genet.">
        <title>The dynamic genome and transcriptome of the human fungal pathogen Blastomyces and close relative Emmonsia.</title>
        <authorList>
            <person name="Munoz J.F."/>
            <person name="Gauthier G.M."/>
            <person name="Desjardins C.A."/>
            <person name="Gallo J.E."/>
            <person name="Holder J."/>
            <person name="Sullivan T.D."/>
            <person name="Marty A.J."/>
            <person name="Carmen J.C."/>
            <person name="Chen Z."/>
            <person name="Ding L."/>
            <person name="Gujja S."/>
            <person name="Magrini V."/>
            <person name="Misas E."/>
            <person name="Mitreva M."/>
            <person name="Priest M."/>
            <person name="Saif S."/>
            <person name="Whiston E.A."/>
            <person name="Young S."/>
            <person name="Zeng Q."/>
            <person name="Goldman W.E."/>
            <person name="Mardis E.R."/>
            <person name="Taylor J.W."/>
            <person name="McEwen J.G."/>
            <person name="Clay O.K."/>
            <person name="Klein B.S."/>
            <person name="Cuomo C.A."/>
        </authorList>
    </citation>
    <scope>NUCLEOTIDE SEQUENCE [LARGE SCALE GENOMIC DNA]</scope>
    <source>
        <strain>SLH14081</strain>
    </source>
</reference>
<feature type="signal peptide" evidence="2">
    <location>
        <begin position="1"/>
        <end position="33"/>
    </location>
</feature>
<feature type="chain" id="PRO_0000411898" description="Pheromone-processing carboxypeptidase KEX1">
    <location>
        <begin position="34"/>
        <end position="638"/>
    </location>
</feature>
<feature type="topological domain" description="Lumenal" evidence="2">
    <location>
        <begin position="34"/>
        <end position="520"/>
    </location>
</feature>
<feature type="transmembrane region" description="Helical" evidence="2">
    <location>
        <begin position="521"/>
        <end position="541"/>
    </location>
</feature>
<feature type="topological domain" description="Cytoplasmic" evidence="2">
    <location>
        <begin position="542"/>
        <end position="638"/>
    </location>
</feature>
<feature type="region of interest" description="Disordered" evidence="3">
    <location>
        <begin position="477"/>
        <end position="507"/>
    </location>
</feature>
<feature type="region of interest" description="Disordered" evidence="3">
    <location>
        <begin position="567"/>
        <end position="638"/>
    </location>
</feature>
<feature type="compositionally biased region" description="Polar residues" evidence="3">
    <location>
        <begin position="489"/>
        <end position="502"/>
    </location>
</feature>
<feature type="compositionally biased region" description="Acidic residues" evidence="3">
    <location>
        <begin position="583"/>
        <end position="594"/>
    </location>
</feature>
<feature type="compositionally biased region" description="Basic and acidic residues" evidence="3">
    <location>
        <begin position="622"/>
        <end position="638"/>
    </location>
</feature>
<feature type="active site" evidence="1">
    <location>
        <position position="185"/>
    </location>
</feature>
<feature type="active site" evidence="1">
    <location>
        <position position="387"/>
    </location>
</feature>
<feature type="active site" evidence="1">
    <location>
        <position position="449"/>
    </location>
</feature>
<feature type="glycosylation site" description="N-linked (GlcNAc...) asparagine" evidence="2">
    <location>
        <position position="118"/>
    </location>
</feature>
<feature type="glycosylation site" description="N-linked (GlcNAc...) asparagine" evidence="2">
    <location>
        <position position="331"/>
    </location>
</feature>
<feature type="glycosylation site" description="N-linked (GlcNAc...) asparagine" evidence="2">
    <location>
        <position position="438"/>
    </location>
</feature>
<feature type="glycosylation site" description="N-linked (GlcNAc...) asparagine" evidence="2">
    <location>
        <position position="446"/>
    </location>
</feature>
<feature type="glycosylation site" description="N-linked (GlcNAc...) asparagine" evidence="2">
    <location>
        <position position="498"/>
    </location>
</feature>
<comment type="function">
    <text evidence="1">Protease with a carboxypeptidase B-like function involved in the C-terminal processing of the lysine and arginine residues from protein precursors. Promotes cell fusion and is involved in the programmed cell death (By similarity).</text>
</comment>
<comment type="catalytic activity">
    <reaction>
        <text>Preferential release of a C-terminal arginine or lysine residue.</text>
        <dbReference type="EC" id="3.4.16.6"/>
    </reaction>
</comment>
<comment type="subcellular location">
    <subcellularLocation>
        <location evidence="1">Golgi apparatus</location>
        <location evidence="1">trans-Golgi network membrane</location>
        <topology evidence="1">Single-pass type I membrane protein</topology>
    </subcellularLocation>
</comment>
<comment type="similarity">
    <text evidence="4">Belongs to the peptidase S10 family.</text>
</comment>
<dbReference type="EC" id="3.4.16.6"/>
<dbReference type="EMBL" id="GG657453">
    <property type="protein sequence ID" value="OAT07936.1"/>
    <property type="molecule type" value="Genomic_DNA"/>
</dbReference>
<dbReference type="RefSeq" id="XP_002625885.1">
    <property type="nucleotide sequence ID" value="XM_002625839.1"/>
</dbReference>
<dbReference type="SMR" id="C5JN54"/>
<dbReference type="STRING" id="559298.C5JN54"/>
<dbReference type="ESTHER" id="ajedr-kex1">
    <property type="family name" value="Carboxypeptidase_S10"/>
</dbReference>
<dbReference type="MEROPS" id="S10.007"/>
<dbReference type="GlyCosmos" id="C5JN54">
    <property type="glycosylation" value="5 sites, No reported glycans"/>
</dbReference>
<dbReference type="GeneID" id="8505374"/>
<dbReference type="KEGG" id="bgh:BDBG_03944"/>
<dbReference type="VEuPathDB" id="FungiDB:BDBG_03944"/>
<dbReference type="HOGENOM" id="CLU_008523_11_0_1"/>
<dbReference type="OrthoDB" id="443318at2759"/>
<dbReference type="Proteomes" id="UP000002038">
    <property type="component" value="Unassembled WGS sequence"/>
</dbReference>
<dbReference type="GO" id="GO:0016020">
    <property type="term" value="C:membrane"/>
    <property type="evidence" value="ECO:0007669"/>
    <property type="project" value="UniProtKB-KW"/>
</dbReference>
<dbReference type="GO" id="GO:0005802">
    <property type="term" value="C:trans-Golgi network"/>
    <property type="evidence" value="ECO:0007669"/>
    <property type="project" value="TreeGrafter"/>
</dbReference>
<dbReference type="GO" id="GO:0004185">
    <property type="term" value="F:serine-type carboxypeptidase activity"/>
    <property type="evidence" value="ECO:0007669"/>
    <property type="project" value="UniProtKB-EC"/>
</dbReference>
<dbReference type="GO" id="GO:0006915">
    <property type="term" value="P:apoptotic process"/>
    <property type="evidence" value="ECO:0007669"/>
    <property type="project" value="UniProtKB-KW"/>
</dbReference>
<dbReference type="GO" id="GO:0006508">
    <property type="term" value="P:proteolysis"/>
    <property type="evidence" value="ECO:0007669"/>
    <property type="project" value="UniProtKB-KW"/>
</dbReference>
<dbReference type="FunFam" id="3.40.50.1820:FF:000121">
    <property type="entry name" value="Carboxypeptidase D"/>
    <property type="match status" value="1"/>
</dbReference>
<dbReference type="Gene3D" id="3.40.50.1820">
    <property type="entry name" value="alpha/beta hydrolase"/>
    <property type="match status" value="1"/>
</dbReference>
<dbReference type="InterPro" id="IPR029058">
    <property type="entry name" value="AB_hydrolase_fold"/>
</dbReference>
<dbReference type="InterPro" id="IPR001563">
    <property type="entry name" value="Peptidase_S10"/>
</dbReference>
<dbReference type="PANTHER" id="PTHR11802:SF190">
    <property type="entry name" value="PHEROMONE-PROCESSING CARBOXYPEPTIDASE KEX1"/>
    <property type="match status" value="1"/>
</dbReference>
<dbReference type="PANTHER" id="PTHR11802">
    <property type="entry name" value="SERINE PROTEASE FAMILY S10 SERINE CARBOXYPEPTIDASE"/>
    <property type="match status" value="1"/>
</dbReference>
<dbReference type="Pfam" id="PF00450">
    <property type="entry name" value="Peptidase_S10"/>
    <property type="match status" value="1"/>
</dbReference>
<dbReference type="PRINTS" id="PR00724">
    <property type="entry name" value="CRBOXYPTASEC"/>
</dbReference>
<dbReference type="SUPFAM" id="SSF53474">
    <property type="entry name" value="alpha/beta-Hydrolases"/>
    <property type="match status" value="1"/>
</dbReference>
<sequence length="638" mass="71434">MGFSETRAYSAWGAWSTWLTICLALANLLPVTAKSAADYFVDSLPGQPEGPLVKMHAGHIEINPETSGNFFFWHFANSHIADKPRTIVWLNGGPGCSSEDGALMEIGPYRVTDDHMLNRTDGSWDEFANLLFVDQPVGTGFSYVSTGAYVSELDEMTSQFVTFMEKWFELFPHYEKDDLYFAGESYAGQYIPYIARAILDRNKKESVQAQNRQWNLKGLLIGNGWISPRHQYLSYLPYAYREGIIQGGTDASLRVEATISKCMKKLNVEDTTGTIHIADCEDILQTIVDETHKGNRCINMYDIRLTDAYSACGMNWPPDLKNIEPYLRYKNVTEALHINSDKQTGWTECSGAVGGNFRALKSKPSVELLPRLLEEGLPILLFSGQKDLICNHMGTEDMIKDMKWSGGTGFELSPGVWAPRQDWTFEGDSAGFYQQARNLTYVLFYNASHMVPFDYPRRTRDMLDKFIGVDITDIGGNPADSRIGGEKGPTTSVGGHPNSTTAAEREKEKMKSAAWKAYYKSGEVALIVVAIAAIIWGVFIWRSRRQKLRNSSHEYRGIYPMLGSSSSGSLPRFSNKRGRSADDVEAADFDETELDERLSRAVSSRSSREHEPYAIGEEDGSDREGEGSDERRGLVDKS</sequence>
<organism>
    <name type="scientific">Blastomyces gilchristii (strain SLH14081)</name>
    <name type="common">Blastomyces dermatitidis</name>
    <dbReference type="NCBI Taxonomy" id="559298"/>
    <lineage>
        <taxon>Eukaryota</taxon>
        <taxon>Fungi</taxon>
        <taxon>Dikarya</taxon>
        <taxon>Ascomycota</taxon>
        <taxon>Pezizomycotina</taxon>
        <taxon>Eurotiomycetes</taxon>
        <taxon>Eurotiomycetidae</taxon>
        <taxon>Onygenales</taxon>
        <taxon>Ajellomycetaceae</taxon>
        <taxon>Blastomyces</taxon>
    </lineage>
</organism>